<protein>
    <recommendedName>
        <fullName evidence="1">Large ribosomal subunit protein uL29</fullName>
    </recommendedName>
    <alternativeName>
        <fullName evidence="2">50S ribosomal protein L29</fullName>
    </alternativeName>
</protein>
<proteinExistence type="inferred from homology"/>
<keyword id="KW-1185">Reference proteome</keyword>
<keyword id="KW-0687">Ribonucleoprotein</keyword>
<keyword id="KW-0689">Ribosomal protein</keyword>
<reference key="1">
    <citation type="journal article" date="2003" name="Proc. Natl. Acad. Sci. U.S.A.">
        <title>The complete genome sequence of the carcinogenic bacterium Helicobacter hepaticus.</title>
        <authorList>
            <person name="Suerbaum S."/>
            <person name="Josenhans C."/>
            <person name="Sterzenbach T."/>
            <person name="Drescher B."/>
            <person name="Brandt P."/>
            <person name="Bell M."/>
            <person name="Droege M."/>
            <person name="Fartmann B."/>
            <person name="Fischer H.-P."/>
            <person name="Ge Z."/>
            <person name="Hoerster A."/>
            <person name="Holland R."/>
            <person name="Klein K."/>
            <person name="Koenig J."/>
            <person name="Macko L."/>
            <person name="Mendz G.L."/>
            <person name="Nyakatura G."/>
            <person name="Schauer D.B."/>
            <person name="Shen Z."/>
            <person name="Weber J."/>
            <person name="Frosch M."/>
            <person name="Fox J.G."/>
        </authorList>
    </citation>
    <scope>NUCLEOTIDE SEQUENCE [LARGE SCALE GENOMIC DNA]</scope>
    <source>
        <strain>ATCC 51449 / 3B1</strain>
    </source>
</reference>
<organism>
    <name type="scientific">Helicobacter hepaticus (strain ATCC 51449 / 3B1)</name>
    <dbReference type="NCBI Taxonomy" id="235279"/>
    <lineage>
        <taxon>Bacteria</taxon>
        <taxon>Pseudomonadati</taxon>
        <taxon>Campylobacterota</taxon>
        <taxon>Epsilonproteobacteria</taxon>
        <taxon>Campylobacterales</taxon>
        <taxon>Helicobacteraceae</taxon>
        <taxon>Helicobacter</taxon>
    </lineage>
</organism>
<sequence length="62" mass="7288">MKFIDLKDKDIAELQKMLKEKKSLLFEKRLQLKTMQLTNPSEIKVIRKDIARINTALSAKKD</sequence>
<gene>
    <name evidence="1" type="primary">rpmC</name>
    <name type="ordered locus">HH_1386</name>
</gene>
<evidence type="ECO:0000255" key="1">
    <source>
        <dbReference type="HAMAP-Rule" id="MF_00374"/>
    </source>
</evidence>
<evidence type="ECO:0000305" key="2"/>
<name>RL29_HELHP</name>
<dbReference type="EMBL" id="AE017125">
    <property type="protein sequence ID" value="AAP77983.1"/>
    <property type="molecule type" value="Genomic_DNA"/>
</dbReference>
<dbReference type="RefSeq" id="WP_011116226.1">
    <property type="nucleotide sequence ID" value="NC_004917.1"/>
</dbReference>
<dbReference type="SMR" id="Q7VGD6"/>
<dbReference type="STRING" id="235279.HH_1386"/>
<dbReference type="GeneID" id="82321514"/>
<dbReference type="KEGG" id="hhe:HH_1386"/>
<dbReference type="eggNOG" id="COG0255">
    <property type="taxonomic scope" value="Bacteria"/>
</dbReference>
<dbReference type="HOGENOM" id="CLU_158491_7_1_7"/>
<dbReference type="Proteomes" id="UP000002495">
    <property type="component" value="Chromosome"/>
</dbReference>
<dbReference type="GO" id="GO:1990904">
    <property type="term" value="C:ribonucleoprotein complex"/>
    <property type="evidence" value="ECO:0007669"/>
    <property type="project" value="UniProtKB-KW"/>
</dbReference>
<dbReference type="GO" id="GO:0005840">
    <property type="term" value="C:ribosome"/>
    <property type="evidence" value="ECO:0007669"/>
    <property type="project" value="UniProtKB-KW"/>
</dbReference>
<dbReference type="GO" id="GO:0003735">
    <property type="term" value="F:structural constituent of ribosome"/>
    <property type="evidence" value="ECO:0007669"/>
    <property type="project" value="InterPro"/>
</dbReference>
<dbReference type="GO" id="GO:0006412">
    <property type="term" value="P:translation"/>
    <property type="evidence" value="ECO:0007669"/>
    <property type="project" value="UniProtKB-UniRule"/>
</dbReference>
<dbReference type="CDD" id="cd00427">
    <property type="entry name" value="Ribosomal_L29_HIP"/>
    <property type="match status" value="1"/>
</dbReference>
<dbReference type="Gene3D" id="1.10.287.310">
    <property type="match status" value="1"/>
</dbReference>
<dbReference type="HAMAP" id="MF_00374">
    <property type="entry name" value="Ribosomal_uL29"/>
    <property type="match status" value="1"/>
</dbReference>
<dbReference type="InterPro" id="IPR001854">
    <property type="entry name" value="Ribosomal_uL29"/>
</dbReference>
<dbReference type="InterPro" id="IPR018254">
    <property type="entry name" value="Ribosomal_uL29_CS"/>
</dbReference>
<dbReference type="InterPro" id="IPR036049">
    <property type="entry name" value="Ribosomal_uL29_sf"/>
</dbReference>
<dbReference type="NCBIfam" id="TIGR00012">
    <property type="entry name" value="L29"/>
    <property type="match status" value="1"/>
</dbReference>
<dbReference type="Pfam" id="PF00831">
    <property type="entry name" value="Ribosomal_L29"/>
    <property type="match status" value="1"/>
</dbReference>
<dbReference type="SUPFAM" id="SSF46561">
    <property type="entry name" value="Ribosomal protein L29 (L29p)"/>
    <property type="match status" value="1"/>
</dbReference>
<dbReference type="PROSITE" id="PS00579">
    <property type="entry name" value="RIBOSOMAL_L29"/>
    <property type="match status" value="1"/>
</dbReference>
<accession>Q7VGD6</accession>
<comment type="similarity">
    <text evidence="1">Belongs to the universal ribosomal protein uL29 family.</text>
</comment>
<feature type="chain" id="PRO_0000130399" description="Large ribosomal subunit protein uL29">
    <location>
        <begin position="1"/>
        <end position="62"/>
    </location>
</feature>